<organism>
    <name type="scientific">Rhodobacter capsulatus</name>
    <name type="common">Rhodopseudomonas capsulata</name>
    <dbReference type="NCBI Taxonomy" id="1061"/>
    <lineage>
        <taxon>Bacteria</taxon>
        <taxon>Pseudomonadati</taxon>
        <taxon>Pseudomonadota</taxon>
        <taxon>Alphaproteobacteria</taxon>
        <taxon>Rhodobacterales</taxon>
        <taxon>Rhodobacter group</taxon>
        <taxon>Rhodobacter</taxon>
    </lineage>
</organism>
<keyword id="KW-0535">Nitrogen fixation</keyword>
<keyword id="KW-0808">Transferase</keyword>
<reference key="1">
    <citation type="journal article" date="1993" name="Mol. Gen. Genet.">
        <title>Nucleotide sequence and genetic analysis of the Rhodobacter capsulatus ORF6-nifUI SVW gene region: possible role of NifW in homocitrate processing.</title>
        <authorList>
            <person name="Masepohl B."/>
            <person name="Angermueller S."/>
            <person name="Hennecke S."/>
            <person name="Huebner P."/>
            <person name="Moreno-Vivian C."/>
            <person name="Klipp W."/>
        </authorList>
    </citation>
    <scope>NUCLEOTIDE SEQUENCE [GENOMIC DNA]</scope>
    <source>
        <strain>ATCC 33303 / B10</strain>
    </source>
</reference>
<accession>Q07179</accession>
<evidence type="ECO:0000255" key="1">
    <source>
        <dbReference type="PROSITE-ProRule" id="PRU01151"/>
    </source>
</evidence>
<evidence type="ECO:0000305" key="2"/>
<gene>
    <name type="primary">nifV</name>
</gene>
<dbReference type="EC" id="2.3.3.14"/>
<dbReference type="EMBL" id="X68444">
    <property type="protein sequence ID" value="CAA48488.1"/>
    <property type="molecule type" value="Genomic_DNA"/>
</dbReference>
<dbReference type="PIR" id="S34817">
    <property type="entry name" value="S34817"/>
</dbReference>
<dbReference type="SMR" id="Q07179"/>
<dbReference type="GO" id="GO:0004410">
    <property type="term" value="F:homocitrate synthase activity"/>
    <property type="evidence" value="ECO:0007669"/>
    <property type="project" value="UniProtKB-EC"/>
</dbReference>
<dbReference type="GO" id="GO:0009058">
    <property type="term" value="P:biosynthetic process"/>
    <property type="evidence" value="ECO:0007669"/>
    <property type="project" value="UniProtKB-ARBA"/>
</dbReference>
<dbReference type="GO" id="GO:0019752">
    <property type="term" value="P:carboxylic acid metabolic process"/>
    <property type="evidence" value="ECO:0007669"/>
    <property type="project" value="InterPro"/>
</dbReference>
<dbReference type="GO" id="GO:0009399">
    <property type="term" value="P:nitrogen fixation"/>
    <property type="evidence" value="ECO:0007669"/>
    <property type="project" value="UniProtKB-KW"/>
</dbReference>
<dbReference type="CDD" id="cd07939">
    <property type="entry name" value="DRE_TIM_NifV"/>
    <property type="match status" value="1"/>
</dbReference>
<dbReference type="Gene3D" id="1.10.238.260">
    <property type="match status" value="1"/>
</dbReference>
<dbReference type="Gene3D" id="3.20.20.70">
    <property type="entry name" value="Aldolase class I"/>
    <property type="match status" value="1"/>
</dbReference>
<dbReference type="InterPro" id="IPR002034">
    <property type="entry name" value="AIPM/Hcit_synth_CS"/>
</dbReference>
<dbReference type="InterPro" id="IPR013785">
    <property type="entry name" value="Aldolase_TIM"/>
</dbReference>
<dbReference type="InterPro" id="IPR054691">
    <property type="entry name" value="LeuA/HCS_post-cat"/>
</dbReference>
<dbReference type="InterPro" id="IPR013477">
    <property type="entry name" value="NifV/FrbC"/>
</dbReference>
<dbReference type="InterPro" id="IPR000891">
    <property type="entry name" value="PYR_CT"/>
</dbReference>
<dbReference type="NCBIfam" id="TIGR02660">
    <property type="entry name" value="nifV_homocitr"/>
    <property type="match status" value="1"/>
</dbReference>
<dbReference type="PANTHER" id="PTHR42880">
    <property type="entry name" value="HOMOCITRATE SYNTHASE"/>
    <property type="match status" value="1"/>
</dbReference>
<dbReference type="PANTHER" id="PTHR42880:SF1">
    <property type="entry name" value="ISOPROPYLMALATE_HOMOCITRATE_CITRAMALATE SYNTHASE FAMILY PROTEIN"/>
    <property type="match status" value="1"/>
</dbReference>
<dbReference type="Pfam" id="PF22617">
    <property type="entry name" value="HCS_D2"/>
    <property type="match status" value="1"/>
</dbReference>
<dbReference type="Pfam" id="PF00682">
    <property type="entry name" value="HMGL-like"/>
    <property type="match status" value="1"/>
</dbReference>
<dbReference type="SUPFAM" id="SSF51569">
    <property type="entry name" value="Aldolase"/>
    <property type="match status" value="1"/>
</dbReference>
<dbReference type="PROSITE" id="PS00815">
    <property type="entry name" value="AIPM_HOMOCIT_SYNTH_1"/>
    <property type="match status" value="1"/>
</dbReference>
<dbReference type="PROSITE" id="PS00816">
    <property type="entry name" value="AIPM_HOMOCIT_SYNTH_2"/>
    <property type="match status" value="1"/>
</dbReference>
<dbReference type="PROSITE" id="PS50991">
    <property type="entry name" value="PYR_CT"/>
    <property type="match status" value="1"/>
</dbReference>
<protein>
    <recommendedName>
        <fullName>Homocitrate synthase</fullName>
        <ecNumber>2.3.3.14</ecNumber>
    </recommendedName>
</protein>
<feature type="chain" id="PRO_0000140465" description="Homocitrate synthase">
    <location>
        <begin position="1"/>
        <end position="382"/>
    </location>
</feature>
<feature type="domain" description="Pyruvate carboxyltransferase" evidence="1">
    <location>
        <begin position="7"/>
        <end position="257"/>
    </location>
</feature>
<name>NIFV_RHOCA</name>
<sequence length="382" mass="40618">MTPDRTLALCDTTLRDGEQTAGVAFSLAEKKAIARALDRAGVAEIEVGIAAMGWAEVAEIRAVVAEIAHATPVVWCRLRMHDLDMAQKTGVKRVHFAVPTSTAQLEGKLRVDRDWILRETAALVFCASDRGLQVSVGAEDASRTDPDFLIRLAEVAAAAGAIRFRIADTLGLLDPLGAFRLVAELSARISLPIEMHAHNDFGMATANTIMAAHAGATHLSVTVNGLGERAGNAACEEVGAALEAGGIDTGLDLCALPELSAVVAKASGRAFRAQKPITGDDWLFAHESGIHVDAILKRADTYEDPRCAPARFGRERQIVIGKHSGSAGLRAALLEAGLPADDAVLDRLKPLLRAHAVRVKRPVEAGDLRRMVARLARPSPRT</sequence>
<comment type="function">
    <text>This protein is a Fe-Mo-cofactor biosynthetic component.</text>
</comment>
<comment type="catalytic activity">
    <reaction>
        <text>acetyl-CoA + 2-oxoglutarate + H2O = (2R)-homocitrate + CoA + H(+)</text>
        <dbReference type="Rhea" id="RHEA:12929"/>
        <dbReference type="ChEBI" id="CHEBI:15377"/>
        <dbReference type="ChEBI" id="CHEBI:15378"/>
        <dbReference type="ChEBI" id="CHEBI:16810"/>
        <dbReference type="ChEBI" id="CHEBI:57287"/>
        <dbReference type="ChEBI" id="CHEBI:57288"/>
        <dbReference type="ChEBI" id="CHEBI:58884"/>
        <dbReference type="EC" id="2.3.3.14"/>
    </reaction>
</comment>
<comment type="similarity">
    <text evidence="2">Belongs to the alpha-IPM synthase/homocitrate synthase family.</text>
</comment>
<proteinExistence type="inferred from homology"/>